<accession>A2R3X3</accession>
<organism>
    <name type="scientific">Aspergillus niger (strain ATCC MYA-4892 / CBS 513.88 / FGSC A1513)</name>
    <dbReference type="NCBI Taxonomy" id="425011"/>
    <lineage>
        <taxon>Eukaryota</taxon>
        <taxon>Fungi</taxon>
        <taxon>Dikarya</taxon>
        <taxon>Ascomycota</taxon>
        <taxon>Pezizomycotina</taxon>
        <taxon>Eurotiomycetes</taxon>
        <taxon>Eurotiomycetidae</taxon>
        <taxon>Eurotiales</taxon>
        <taxon>Aspergillaceae</taxon>
        <taxon>Aspergillus</taxon>
        <taxon>Aspergillus subgen. Circumdati</taxon>
    </lineage>
</organism>
<name>AGUA_ASPNC</name>
<evidence type="ECO:0000250" key="1"/>
<evidence type="ECO:0000255" key="2"/>
<evidence type="ECO:0000305" key="3"/>
<dbReference type="EC" id="3.2.1.139"/>
<dbReference type="EMBL" id="AM270325">
    <property type="protein sequence ID" value="CAK42141.1"/>
    <property type="molecule type" value="Genomic_DNA"/>
</dbReference>
<dbReference type="RefSeq" id="XP_001401203.1">
    <property type="nucleotide sequence ID" value="XM_001401166.1"/>
</dbReference>
<dbReference type="SMR" id="A2R3X3"/>
<dbReference type="CAZy" id="GH67">
    <property type="family name" value="Glycoside Hydrolase Family 67"/>
</dbReference>
<dbReference type="GlyCosmos" id="A2R3X3">
    <property type="glycosylation" value="15 sites, No reported glycans"/>
</dbReference>
<dbReference type="EnsemblFungi" id="CAK42141">
    <property type="protein sequence ID" value="CAK42141"/>
    <property type="gene ID" value="An14g05800"/>
</dbReference>
<dbReference type="GeneID" id="4987438"/>
<dbReference type="KEGG" id="ang:An14g05800"/>
<dbReference type="VEuPathDB" id="FungiDB:An14g05800"/>
<dbReference type="HOGENOM" id="CLU_007125_2_0_1"/>
<dbReference type="Proteomes" id="UP000006706">
    <property type="component" value="Chromosome 1R"/>
</dbReference>
<dbReference type="GO" id="GO:0005576">
    <property type="term" value="C:extracellular region"/>
    <property type="evidence" value="ECO:0007669"/>
    <property type="project" value="UniProtKB-SubCell"/>
</dbReference>
<dbReference type="GO" id="GO:0046559">
    <property type="term" value="F:alpha-glucuronidase activity"/>
    <property type="evidence" value="ECO:0007669"/>
    <property type="project" value="UniProtKB-EC"/>
</dbReference>
<dbReference type="GO" id="GO:0045493">
    <property type="term" value="P:xylan catabolic process"/>
    <property type="evidence" value="ECO:0007669"/>
    <property type="project" value="UniProtKB-KW"/>
</dbReference>
<dbReference type="CDD" id="cd02795">
    <property type="entry name" value="CBM6-CBM35-CBM36_like"/>
    <property type="match status" value="1"/>
</dbReference>
<dbReference type="FunFam" id="3.20.20.80:FF:000096">
    <property type="entry name" value="Xylan alpha-1,2-glucuronidase"/>
    <property type="match status" value="1"/>
</dbReference>
<dbReference type="Gene3D" id="3.90.1330.10">
    <property type="entry name" value="Alpha-glucuronidase, C-terminal domain"/>
    <property type="match status" value="1"/>
</dbReference>
<dbReference type="Gene3D" id="3.30.379.10">
    <property type="entry name" value="Chitobiase/beta-hexosaminidase domain 2-like"/>
    <property type="match status" value="1"/>
</dbReference>
<dbReference type="Gene3D" id="3.20.20.80">
    <property type="entry name" value="Glycosidases"/>
    <property type="match status" value="1"/>
</dbReference>
<dbReference type="InterPro" id="IPR037054">
    <property type="entry name" value="A-glucoronidase_C_sf"/>
</dbReference>
<dbReference type="InterPro" id="IPR011395">
    <property type="entry name" value="Glyco_hydro_67_aGlcAse"/>
</dbReference>
<dbReference type="InterPro" id="IPR005154">
    <property type="entry name" value="Glyco_hydro_67_aGlcAse_N"/>
</dbReference>
<dbReference type="InterPro" id="IPR011099">
    <property type="entry name" value="Glyco_hydro_67_C"/>
</dbReference>
<dbReference type="InterPro" id="IPR011100">
    <property type="entry name" value="Glyco_hydro_67_cat"/>
</dbReference>
<dbReference type="InterPro" id="IPR017853">
    <property type="entry name" value="Glycoside_hydrolase_SF"/>
</dbReference>
<dbReference type="InterPro" id="IPR029018">
    <property type="entry name" value="Hex-like_dom2"/>
</dbReference>
<dbReference type="PANTHER" id="PTHR39207">
    <property type="entry name" value="ALPHA-GLUCURONIDASE A"/>
    <property type="match status" value="1"/>
</dbReference>
<dbReference type="PANTHER" id="PTHR39207:SF1">
    <property type="entry name" value="ALPHA-GLUCURONIDASE A"/>
    <property type="match status" value="1"/>
</dbReference>
<dbReference type="Pfam" id="PF07477">
    <property type="entry name" value="Glyco_hydro_67C"/>
    <property type="match status" value="1"/>
</dbReference>
<dbReference type="Pfam" id="PF07488">
    <property type="entry name" value="Glyco_hydro_67M"/>
    <property type="match status" value="1"/>
</dbReference>
<dbReference type="Pfam" id="PF03648">
    <property type="entry name" value="Glyco_hydro_67N"/>
    <property type="match status" value="1"/>
</dbReference>
<dbReference type="PIRSF" id="PIRSF029900">
    <property type="entry name" value="Alpha-glucuronds"/>
    <property type="match status" value="1"/>
</dbReference>
<dbReference type="SUPFAM" id="SSF51445">
    <property type="entry name" value="(Trans)glycosidases"/>
    <property type="match status" value="1"/>
</dbReference>
<dbReference type="SUPFAM" id="SSF55545">
    <property type="entry name" value="beta-N-acetylhexosaminidase-like domain"/>
    <property type="match status" value="1"/>
</dbReference>
<keyword id="KW-0119">Carbohydrate metabolism</keyword>
<keyword id="KW-0325">Glycoprotein</keyword>
<keyword id="KW-0326">Glycosidase</keyword>
<keyword id="KW-0378">Hydrolase</keyword>
<keyword id="KW-0624">Polysaccharide degradation</keyword>
<keyword id="KW-1185">Reference proteome</keyword>
<keyword id="KW-0964">Secreted</keyword>
<keyword id="KW-0732">Signal</keyword>
<keyword id="KW-0858">Xylan degradation</keyword>
<comment type="function">
    <text evidence="1">Alpha-glucuronidase involved in the hydrolysis of xylan, a major structural heterogeneous polysaccharide found in plant biomass representing the second most abundant polysaccharide in the biosphere, after cellulose. Releases 4-O-methylglucuronic acid from xylan (By similarity).</text>
</comment>
<comment type="catalytic activity">
    <reaction>
        <text>an alpha-D-glucuronoside + H2O = D-glucuronate + an alcohol</text>
        <dbReference type="Rhea" id="RHEA:20005"/>
        <dbReference type="ChEBI" id="CHEBI:15377"/>
        <dbReference type="ChEBI" id="CHEBI:30879"/>
        <dbReference type="ChEBI" id="CHEBI:58720"/>
        <dbReference type="ChEBI" id="CHEBI:58899"/>
        <dbReference type="EC" id="3.2.1.139"/>
    </reaction>
</comment>
<comment type="subcellular location">
    <subcellularLocation>
        <location evidence="1">Secreted</location>
    </subcellularLocation>
</comment>
<comment type="similarity">
    <text evidence="3">Belongs to the glycosyl hydrolase 67 family.</text>
</comment>
<reference key="1">
    <citation type="journal article" date="2007" name="Nat. Biotechnol.">
        <title>Genome sequencing and analysis of the versatile cell factory Aspergillus niger CBS 513.88.</title>
        <authorList>
            <person name="Pel H.J."/>
            <person name="de Winde J.H."/>
            <person name="Archer D.B."/>
            <person name="Dyer P.S."/>
            <person name="Hofmann G."/>
            <person name="Schaap P.J."/>
            <person name="Turner G."/>
            <person name="de Vries R.P."/>
            <person name="Albang R."/>
            <person name="Albermann K."/>
            <person name="Andersen M.R."/>
            <person name="Bendtsen J.D."/>
            <person name="Benen J.A.E."/>
            <person name="van den Berg M."/>
            <person name="Breestraat S."/>
            <person name="Caddick M.X."/>
            <person name="Contreras R."/>
            <person name="Cornell M."/>
            <person name="Coutinho P.M."/>
            <person name="Danchin E.G.J."/>
            <person name="Debets A.J.M."/>
            <person name="Dekker P."/>
            <person name="van Dijck P.W.M."/>
            <person name="van Dijk A."/>
            <person name="Dijkhuizen L."/>
            <person name="Driessen A.J.M."/>
            <person name="d'Enfert C."/>
            <person name="Geysens S."/>
            <person name="Goosen C."/>
            <person name="Groot G.S.P."/>
            <person name="de Groot P.W.J."/>
            <person name="Guillemette T."/>
            <person name="Henrissat B."/>
            <person name="Herweijer M."/>
            <person name="van den Hombergh J.P.T.W."/>
            <person name="van den Hondel C.A.M.J.J."/>
            <person name="van der Heijden R.T.J.M."/>
            <person name="van der Kaaij R.M."/>
            <person name="Klis F.M."/>
            <person name="Kools H.J."/>
            <person name="Kubicek C.P."/>
            <person name="van Kuyk P.A."/>
            <person name="Lauber J."/>
            <person name="Lu X."/>
            <person name="van der Maarel M.J.E.C."/>
            <person name="Meulenberg R."/>
            <person name="Menke H."/>
            <person name="Mortimer M.A."/>
            <person name="Nielsen J."/>
            <person name="Oliver S.G."/>
            <person name="Olsthoorn M."/>
            <person name="Pal K."/>
            <person name="van Peij N.N.M.E."/>
            <person name="Ram A.F.J."/>
            <person name="Rinas U."/>
            <person name="Roubos J.A."/>
            <person name="Sagt C.M.J."/>
            <person name="Schmoll M."/>
            <person name="Sun J."/>
            <person name="Ussery D."/>
            <person name="Varga J."/>
            <person name="Vervecken W."/>
            <person name="van de Vondervoort P.J.J."/>
            <person name="Wedler H."/>
            <person name="Woesten H.A.B."/>
            <person name="Zeng A.-P."/>
            <person name="van Ooyen A.J.J."/>
            <person name="Visser J."/>
            <person name="Stam H."/>
        </authorList>
    </citation>
    <scope>NUCLEOTIDE SEQUENCE [LARGE SCALE GENOMIC DNA]</scope>
    <source>
        <strain>ATCC MYA-4892 / CBS 513.88 / FGSC A1513</strain>
    </source>
</reference>
<feature type="signal peptide" evidence="2">
    <location>
        <begin position="1"/>
        <end position="20"/>
    </location>
</feature>
<feature type="chain" id="PRO_5000220976" description="Probable alpha-glucuronidase A">
    <location>
        <begin position="21"/>
        <end position="841"/>
    </location>
</feature>
<feature type="glycosylation site" description="N-linked (GlcNAc...) asparagine" evidence="2">
    <location>
        <position position="51"/>
    </location>
</feature>
<feature type="glycosylation site" description="N-linked (GlcNAc...) asparagine" evidence="2">
    <location>
        <position position="76"/>
    </location>
</feature>
<feature type="glycosylation site" description="N-linked (GlcNAc...) asparagine" evidence="2">
    <location>
        <position position="85"/>
    </location>
</feature>
<feature type="glycosylation site" description="N-linked (GlcNAc...) asparagine" evidence="2">
    <location>
        <position position="149"/>
    </location>
</feature>
<feature type="glycosylation site" description="N-linked (GlcNAc...) asparagine" evidence="2">
    <location>
        <position position="222"/>
    </location>
</feature>
<feature type="glycosylation site" description="N-linked (GlcNAc...) asparagine" evidence="2">
    <location>
        <position position="279"/>
    </location>
</feature>
<feature type="glycosylation site" description="N-linked (GlcNAc...) asparagine" evidence="2">
    <location>
        <position position="310"/>
    </location>
</feature>
<feature type="glycosylation site" description="N-linked (GlcNAc...) asparagine" evidence="2">
    <location>
        <position position="343"/>
    </location>
</feature>
<feature type="glycosylation site" description="N-linked (GlcNAc...) asparagine" evidence="2">
    <location>
        <position position="450"/>
    </location>
</feature>
<feature type="glycosylation site" description="N-linked (GlcNAc...) asparagine" evidence="2">
    <location>
        <position position="465"/>
    </location>
</feature>
<feature type="glycosylation site" description="N-linked (GlcNAc...) asparagine" evidence="2">
    <location>
        <position position="527"/>
    </location>
</feature>
<feature type="glycosylation site" description="N-linked (GlcNAc...) asparagine" evidence="2">
    <location>
        <position position="576"/>
    </location>
</feature>
<feature type="glycosylation site" description="N-linked (GlcNAc...) asparagine" evidence="2">
    <location>
        <position position="682"/>
    </location>
</feature>
<feature type="glycosylation site" description="N-linked (GlcNAc...) asparagine" evidence="2">
    <location>
        <position position="723"/>
    </location>
</feature>
<feature type="glycosylation site" description="N-linked (GlcNAc...) asparagine" evidence="2">
    <location>
        <position position="732"/>
    </location>
</feature>
<protein>
    <recommendedName>
        <fullName>Probable alpha-glucuronidase A</fullName>
        <ecNumber>3.2.1.139</ecNumber>
    </recommendedName>
    <alternativeName>
        <fullName>Alpha-glucosiduronase A</fullName>
    </alternativeName>
</protein>
<proteinExistence type="inferred from homology"/>
<sequence length="841" mass="93732">MRGLNLFQLILALLLSMVAAEDGYDGWLRYAPVSCDLHCQQALPSHVVLLNSTKGSPIETAGRELKAGFQSILSTNLTSRPFQCNSSASILVATLDEYRQRCRDINVPELDPDGFWLQSEGDTVRILGKDARGALYGAYEYLAMVAQRNFSRVAYATSPHAPIRWVNQWDNMDGSIERGYGGASIFFKDGTVVEDMAPVEQYARLLASIRINAIVVNNVNANATLLLPENMKGLSRIADACRPYGVQIGISLNFASPEALGGLNTYDPLDPGVIAWWQNITDSLYTYVPDMAGYLVKADSEGQPGPDTYNRTLSQGANLFARALQPYGGVLMYRAFVYDDNLNESDWKADRAKAAVEYFKDLDGQFEENVVIQIKYGPIDFQVREPTSPLFANLYHTNTAIELEVSQEYLGQQCHLVYLPPLWKTVLDFDLRVDHKPSMVRDIISGQRFNRTLGGWAAVVNVGTNRTWLGSHLAMSNLYAYGRLAWSPTDESEQILEDWTRLTFGQNHHVINTISDMSMTSWPAYENYTGNLGIQTLTDILYTHYGPNPATQDNNGWGQWTRADHDSVGMDRTIWNGTGYTGQYPEEVARVYESLESTPDDLVLWFHHVPWTHRLHSGVTVIQHFYNAHYAGAEAAHGFVRQWESLEGLIDRERYEAMRSRLVYQAGHSIVWRDAINNFYYNMTGIPDVAGRVGHHPWRIEAESMGLDGYQTYTVSPFEAASNTTAIITTSNSTTGTARTSIKAPSGVYDIGVNYYDLYGGQSKWTLSVGDKVVGQWLGDMEHNSLGHTPSIYLGGHSATRITFHGVGIRQGDQLKIVGEANGVEPAPLDYIVLLPPGLVD</sequence>
<gene>
    <name type="primary">aguA</name>
    <name type="ORF">An14g05800</name>
</gene>